<reference key="1">
    <citation type="journal article" date="1997" name="Biochem. J.">
        <title>Cloning and characterization of murine carnitine acetyltransferase: evidence for a requirement during cell cycle progression.</title>
        <authorList>
            <person name="Brunner S."/>
            <person name="Kramar K."/>
            <person name="Denhardt D.T."/>
            <person name="Hofbauer R."/>
        </authorList>
    </citation>
    <scope>NUCLEOTIDE SEQUENCE [MRNA]</scope>
</reference>
<reference key="2">
    <citation type="journal article" date="2005" name="Science">
        <title>The transcriptional landscape of the mammalian genome.</title>
        <authorList>
            <person name="Carninci P."/>
            <person name="Kasukawa T."/>
            <person name="Katayama S."/>
            <person name="Gough J."/>
            <person name="Frith M.C."/>
            <person name="Maeda N."/>
            <person name="Oyama R."/>
            <person name="Ravasi T."/>
            <person name="Lenhard B."/>
            <person name="Wells C."/>
            <person name="Kodzius R."/>
            <person name="Shimokawa K."/>
            <person name="Bajic V.B."/>
            <person name="Brenner S.E."/>
            <person name="Batalov S."/>
            <person name="Forrest A.R."/>
            <person name="Zavolan M."/>
            <person name="Davis M.J."/>
            <person name="Wilming L.G."/>
            <person name="Aidinis V."/>
            <person name="Allen J.E."/>
            <person name="Ambesi-Impiombato A."/>
            <person name="Apweiler R."/>
            <person name="Aturaliya R.N."/>
            <person name="Bailey T.L."/>
            <person name="Bansal M."/>
            <person name="Baxter L."/>
            <person name="Beisel K.W."/>
            <person name="Bersano T."/>
            <person name="Bono H."/>
            <person name="Chalk A.M."/>
            <person name="Chiu K.P."/>
            <person name="Choudhary V."/>
            <person name="Christoffels A."/>
            <person name="Clutterbuck D.R."/>
            <person name="Crowe M.L."/>
            <person name="Dalla E."/>
            <person name="Dalrymple B.P."/>
            <person name="de Bono B."/>
            <person name="Della Gatta G."/>
            <person name="di Bernardo D."/>
            <person name="Down T."/>
            <person name="Engstrom P."/>
            <person name="Fagiolini M."/>
            <person name="Faulkner G."/>
            <person name="Fletcher C.F."/>
            <person name="Fukushima T."/>
            <person name="Furuno M."/>
            <person name="Futaki S."/>
            <person name="Gariboldi M."/>
            <person name="Georgii-Hemming P."/>
            <person name="Gingeras T.R."/>
            <person name="Gojobori T."/>
            <person name="Green R.E."/>
            <person name="Gustincich S."/>
            <person name="Harbers M."/>
            <person name="Hayashi Y."/>
            <person name="Hensch T.K."/>
            <person name="Hirokawa N."/>
            <person name="Hill D."/>
            <person name="Huminiecki L."/>
            <person name="Iacono M."/>
            <person name="Ikeo K."/>
            <person name="Iwama A."/>
            <person name="Ishikawa T."/>
            <person name="Jakt M."/>
            <person name="Kanapin A."/>
            <person name="Katoh M."/>
            <person name="Kawasawa Y."/>
            <person name="Kelso J."/>
            <person name="Kitamura H."/>
            <person name="Kitano H."/>
            <person name="Kollias G."/>
            <person name="Krishnan S.P."/>
            <person name="Kruger A."/>
            <person name="Kummerfeld S.K."/>
            <person name="Kurochkin I.V."/>
            <person name="Lareau L.F."/>
            <person name="Lazarevic D."/>
            <person name="Lipovich L."/>
            <person name="Liu J."/>
            <person name="Liuni S."/>
            <person name="McWilliam S."/>
            <person name="Madan Babu M."/>
            <person name="Madera M."/>
            <person name="Marchionni L."/>
            <person name="Matsuda H."/>
            <person name="Matsuzawa S."/>
            <person name="Miki H."/>
            <person name="Mignone F."/>
            <person name="Miyake S."/>
            <person name="Morris K."/>
            <person name="Mottagui-Tabar S."/>
            <person name="Mulder N."/>
            <person name="Nakano N."/>
            <person name="Nakauchi H."/>
            <person name="Ng P."/>
            <person name="Nilsson R."/>
            <person name="Nishiguchi S."/>
            <person name="Nishikawa S."/>
            <person name="Nori F."/>
            <person name="Ohara O."/>
            <person name="Okazaki Y."/>
            <person name="Orlando V."/>
            <person name="Pang K.C."/>
            <person name="Pavan W.J."/>
            <person name="Pavesi G."/>
            <person name="Pesole G."/>
            <person name="Petrovsky N."/>
            <person name="Piazza S."/>
            <person name="Reed J."/>
            <person name="Reid J.F."/>
            <person name="Ring B.Z."/>
            <person name="Ringwald M."/>
            <person name="Rost B."/>
            <person name="Ruan Y."/>
            <person name="Salzberg S.L."/>
            <person name="Sandelin A."/>
            <person name="Schneider C."/>
            <person name="Schoenbach C."/>
            <person name="Sekiguchi K."/>
            <person name="Semple C.A."/>
            <person name="Seno S."/>
            <person name="Sessa L."/>
            <person name="Sheng Y."/>
            <person name="Shibata Y."/>
            <person name="Shimada H."/>
            <person name="Shimada K."/>
            <person name="Silva D."/>
            <person name="Sinclair B."/>
            <person name="Sperling S."/>
            <person name="Stupka E."/>
            <person name="Sugiura K."/>
            <person name="Sultana R."/>
            <person name="Takenaka Y."/>
            <person name="Taki K."/>
            <person name="Tammoja K."/>
            <person name="Tan S.L."/>
            <person name="Tang S."/>
            <person name="Taylor M.S."/>
            <person name="Tegner J."/>
            <person name="Teichmann S.A."/>
            <person name="Ueda H.R."/>
            <person name="van Nimwegen E."/>
            <person name="Verardo R."/>
            <person name="Wei C.L."/>
            <person name="Yagi K."/>
            <person name="Yamanishi H."/>
            <person name="Zabarovsky E."/>
            <person name="Zhu S."/>
            <person name="Zimmer A."/>
            <person name="Hide W."/>
            <person name="Bult C."/>
            <person name="Grimmond S.M."/>
            <person name="Teasdale R.D."/>
            <person name="Liu E.T."/>
            <person name="Brusic V."/>
            <person name="Quackenbush J."/>
            <person name="Wahlestedt C."/>
            <person name="Mattick J.S."/>
            <person name="Hume D.A."/>
            <person name="Kai C."/>
            <person name="Sasaki D."/>
            <person name="Tomaru Y."/>
            <person name="Fukuda S."/>
            <person name="Kanamori-Katayama M."/>
            <person name="Suzuki M."/>
            <person name="Aoki J."/>
            <person name="Arakawa T."/>
            <person name="Iida J."/>
            <person name="Imamura K."/>
            <person name="Itoh M."/>
            <person name="Kato T."/>
            <person name="Kawaji H."/>
            <person name="Kawagashira N."/>
            <person name="Kawashima T."/>
            <person name="Kojima M."/>
            <person name="Kondo S."/>
            <person name="Konno H."/>
            <person name="Nakano K."/>
            <person name="Ninomiya N."/>
            <person name="Nishio T."/>
            <person name="Okada M."/>
            <person name="Plessy C."/>
            <person name="Shibata K."/>
            <person name="Shiraki T."/>
            <person name="Suzuki S."/>
            <person name="Tagami M."/>
            <person name="Waki K."/>
            <person name="Watahiki A."/>
            <person name="Okamura-Oho Y."/>
            <person name="Suzuki H."/>
            <person name="Kawai J."/>
            <person name="Hayashizaki Y."/>
        </authorList>
    </citation>
    <scope>NUCLEOTIDE SEQUENCE [LARGE SCALE MRNA]</scope>
    <source>
        <strain>C57BL/6J</strain>
        <strain>NOD</strain>
        <tissue>Head</tissue>
    </source>
</reference>
<reference key="3">
    <citation type="journal article" date="2009" name="PLoS Biol.">
        <title>Lineage-specific biology revealed by a finished genome assembly of the mouse.</title>
        <authorList>
            <person name="Church D.M."/>
            <person name="Goodstadt L."/>
            <person name="Hillier L.W."/>
            <person name="Zody M.C."/>
            <person name="Goldstein S."/>
            <person name="She X."/>
            <person name="Bult C.J."/>
            <person name="Agarwala R."/>
            <person name="Cherry J.L."/>
            <person name="DiCuccio M."/>
            <person name="Hlavina W."/>
            <person name="Kapustin Y."/>
            <person name="Meric P."/>
            <person name="Maglott D."/>
            <person name="Birtle Z."/>
            <person name="Marques A.C."/>
            <person name="Graves T."/>
            <person name="Zhou S."/>
            <person name="Teague B."/>
            <person name="Potamousis K."/>
            <person name="Churas C."/>
            <person name="Place M."/>
            <person name="Herschleb J."/>
            <person name="Runnheim R."/>
            <person name="Forrest D."/>
            <person name="Amos-Landgraf J."/>
            <person name="Schwartz D.C."/>
            <person name="Cheng Z."/>
            <person name="Lindblad-Toh K."/>
            <person name="Eichler E.E."/>
            <person name="Ponting C.P."/>
        </authorList>
    </citation>
    <scope>NUCLEOTIDE SEQUENCE [LARGE SCALE GENOMIC DNA]</scope>
    <source>
        <strain>C57BL/6J</strain>
    </source>
</reference>
<reference key="4">
    <citation type="journal article" date="2004" name="Genome Res.">
        <title>The status, quality, and expansion of the NIH full-length cDNA project: the Mammalian Gene Collection (MGC).</title>
        <authorList>
            <consortium name="The MGC Project Team"/>
        </authorList>
    </citation>
    <scope>NUCLEOTIDE SEQUENCE [LARGE SCALE MRNA]</scope>
    <source>
        <strain>FVB/N</strain>
        <tissue>Mammary gland</tissue>
    </source>
</reference>
<reference key="5">
    <citation type="journal article" date="2010" name="Cell">
        <title>A tissue-specific atlas of mouse protein phosphorylation and expression.</title>
        <authorList>
            <person name="Huttlin E.L."/>
            <person name="Jedrychowski M.P."/>
            <person name="Elias J.E."/>
            <person name="Goswami T."/>
            <person name="Rad R."/>
            <person name="Beausoleil S.A."/>
            <person name="Villen J."/>
            <person name="Haas W."/>
            <person name="Sowa M.E."/>
            <person name="Gygi S.P."/>
        </authorList>
    </citation>
    <scope>IDENTIFICATION BY MASS SPECTROMETRY [LARGE SCALE ANALYSIS]</scope>
    <source>
        <tissue>Brain</tissue>
        <tissue>Brown adipose tissue</tissue>
        <tissue>Heart</tissue>
        <tissue>Kidney</tissue>
        <tissue>Liver</tissue>
        <tissue>Lung</tissue>
        <tissue>Pancreas</tissue>
        <tissue>Spleen</tissue>
        <tissue>Testis</tissue>
    </source>
</reference>
<reference key="6">
    <citation type="journal article" date="2013" name="Mol. Cell">
        <title>SIRT5-mediated lysine desuccinylation impacts diverse metabolic pathways.</title>
        <authorList>
            <person name="Park J."/>
            <person name="Chen Y."/>
            <person name="Tishkoff D.X."/>
            <person name="Peng C."/>
            <person name="Tan M."/>
            <person name="Dai L."/>
            <person name="Xie Z."/>
            <person name="Zhang Y."/>
            <person name="Zwaans B.M."/>
            <person name="Skinner M.E."/>
            <person name="Lombard D.B."/>
            <person name="Zhao Y."/>
        </authorList>
    </citation>
    <scope>SUCCINYLATION [LARGE SCALE ANALYSIS] AT LYS-93 AND LYS-261</scope>
    <scope>IDENTIFICATION BY MASS SPECTROMETRY [LARGE SCALE ANALYSIS]</scope>
    <source>
        <tissue>Liver</tissue>
    </source>
</reference>
<reference key="7">
    <citation type="journal article" date="2003" name="Cell">
        <title>Crystal structure of carnitine acetyltransferase and implications for the catalytic mechanism and fatty acid transport.</title>
        <authorList>
            <person name="Jogl G."/>
            <person name="Tong L."/>
        </authorList>
    </citation>
    <scope>X-RAY CRYSTALLOGRAPHY (1.8 ANGSTROMS) OF 30-626 IN COMPLEX WITH CARNITINE AND COENZYME A</scope>
</reference>
<reference key="8">
    <citation type="journal article" date="2004" name="J. Biol. Chem.">
        <title>Structural and biochemical studies of the substrate selectivity of carnitine acetyltransferase.</title>
        <authorList>
            <person name="Hsiao Y.-S."/>
            <person name="Jogl G."/>
            <person name="Tong L."/>
        </authorList>
    </citation>
    <scope>X-RAY CRYSTALLOGRAPHY (1.8 ANGSTROMS) OF 30-626 OF MUTANTS GLY-564 AND ALA-565 IN COMPLEX WITH CARNITINE AND COENZYME A</scope>
</reference>
<proteinExistence type="evidence at protein level"/>
<feature type="chain" id="PRO_0000210173" description="Carnitine O-acetyltransferase">
    <location>
        <begin position="1"/>
        <end position="626"/>
    </location>
</feature>
<feature type="short sequence motif" description="Microbody targeting signal" evidence="2">
    <location>
        <begin position="624"/>
        <end position="626"/>
    </location>
</feature>
<feature type="active site" description="Proton acceptor">
    <location>
        <position position="343"/>
    </location>
</feature>
<feature type="binding site" evidence="3 4">
    <location>
        <position position="419"/>
    </location>
    <ligand>
        <name>CoA</name>
        <dbReference type="ChEBI" id="CHEBI:57287"/>
    </ligand>
</feature>
<feature type="binding site">
    <location>
        <begin position="423"/>
        <end position="430"/>
    </location>
    <ligand>
        <name>CoA</name>
        <dbReference type="ChEBI" id="CHEBI:57287"/>
    </ligand>
</feature>
<feature type="binding site" evidence="3 4">
    <location>
        <position position="452"/>
    </location>
    <ligand>
        <name>(R)-carnitine</name>
        <dbReference type="ChEBI" id="CHEBI:16347"/>
    </ligand>
</feature>
<feature type="binding site" evidence="3 4">
    <location>
        <position position="454"/>
    </location>
    <ligand>
        <name>(R)-carnitine</name>
        <dbReference type="ChEBI" id="CHEBI:16347"/>
    </ligand>
</feature>
<feature type="binding site" evidence="3 4">
    <location>
        <position position="456"/>
    </location>
    <ligand>
        <name>CoA</name>
        <dbReference type="ChEBI" id="CHEBI:57287"/>
    </ligand>
</feature>
<feature type="binding site" evidence="3 4">
    <location>
        <position position="465"/>
    </location>
    <ligand>
        <name>(R)-carnitine</name>
        <dbReference type="ChEBI" id="CHEBI:16347"/>
    </ligand>
</feature>
<feature type="binding site" evidence="3 4">
    <location>
        <position position="504"/>
    </location>
    <ligand>
        <name>CoA</name>
        <dbReference type="ChEBI" id="CHEBI:57287"/>
    </ligand>
</feature>
<feature type="binding site" evidence="3 4">
    <location>
        <position position="555"/>
    </location>
    <ligand>
        <name>CoA</name>
        <dbReference type="ChEBI" id="CHEBI:57287"/>
    </ligand>
</feature>
<feature type="modified residue" description="N6-succinyllysine" evidence="7">
    <location>
        <position position="93"/>
    </location>
</feature>
<feature type="modified residue" description="N6-acetyllysine; alternate" evidence="1">
    <location>
        <position position="261"/>
    </location>
</feature>
<feature type="modified residue" description="N6-succinyllysine; alternate" evidence="7">
    <location>
        <position position="261"/>
    </location>
</feature>
<feature type="modified residue" description="N6-acetyllysine" evidence="1">
    <location>
        <position position="268"/>
    </location>
</feature>
<feature type="mutagenesis site" description="Lowers activity towards short-chain fatty acids.">
    <original>M</original>
    <variation>A</variation>
    <location>
        <position position="564"/>
    </location>
</feature>
<feature type="mutagenesis site" description="Lowers activity towards short-chain fatty acids. Strong increase in activity towards medium chain fatty acids.">
    <original>M</original>
    <variation>G</variation>
    <location>
        <position position="564"/>
    </location>
</feature>
<feature type="mutagenesis site" description="Increases activity towards short-chain fatty acids.">
    <original>F</original>
    <variation>A</variation>
    <location>
        <position position="565"/>
    </location>
</feature>
<feature type="sequence conflict" description="In Ref. 2; BAE41993." evidence="5" ref="2">
    <original>P</original>
    <variation>S</variation>
    <location>
        <position position="39"/>
    </location>
</feature>
<feature type="sequence conflict" description="In Ref. 1; CAA59971." evidence="5" ref="1">
    <original>FRQ</original>
    <variation>LPDK</variation>
    <location>
        <begin position="110"/>
        <end position="112"/>
    </location>
</feature>
<feature type="sequence conflict" description="In Ref. 1; CAA59971." evidence="5" ref="1">
    <original>V</original>
    <variation>E</variation>
    <location>
        <position position="182"/>
    </location>
</feature>
<feature type="sequence conflict" description="In Ref. 2; BAE41993." evidence="5" ref="2">
    <original>Y</original>
    <variation>H</variation>
    <location>
        <position position="217"/>
    </location>
</feature>
<feature type="sequence conflict" description="In Ref. 1; CAA59971." evidence="5" ref="1">
    <original>H</original>
    <variation>N</variation>
    <location>
        <position position="218"/>
    </location>
</feature>
<feature type="sequence conflict" description="In Ref. 1; CAA59971." evidence="5" ref="1">
    <original>F</original>
    <variation>L</variation>
    <location>
        <position position="587"/>
    </location>
</feature>
<feature type="helix" evidence="8">
    <location>
        <begin position="32"/>
        <end position="34"/>
    </location>
</feature>
<feature type="helix" evidence="8">
    <location>
        <begin position="43"/>
        <end position="54"/>
    </location>
</feature>
<feature type="turn" evidence="8">
    <location>
        <begin position="55"/>
        <end position="57"/>
    </location>
</feature>
<feature type="helix" evidence="8">
    <location>
        <begin position="60"/>
        <end position="73"/>
    </location>
</feature>
<feature type="helix" evidence="8">
    <location>
        <begin position="79"/>
        <end position="93"/>
    </location>
</feature>
<feature type="helix" evidence="8">
    <location>
        <begin position="99"/>
        <end position="106"/>
    </location>
</feature>
<feature type="turn" evidence="8">
    <location>
        <begin position="107"/>
        <end position="109"/>
    </location>
</feature>
<feature type="turn" evidence="8">
    <location>
        <begin position="116"/>
        <end position="118"/>
    </location>
</feature>
<feature type="strand" evidence="8">
    <location>
        <begin position="121"/>
        <end position="124"/>
    </location>
</feature>
<feature type="helix" evidence="8">
    <location>
        <begin position="132"/>
        <end position="154"/>
    </location>
</feature>
<feature type="strand" evidence="8">
    <location>
        <begin position="163"/>
        <end position="165"/>
    </location>
</feature>
<feature type="strand" evidence="10">
    <location>
        <begin position="166"/>
        <end position="168"/>
    </location>
</feature>
<feature type="helix" evidence="8">
    <location>
        <begin position="171"/>
        <end position="174"/>
    </location>
</feature>
<feature type="strand" evidence="8">
    <location>
        <begin position="176"/>
        <end position="182"/>
    </location>
</feature>
<feature type="strand" evidence="8">
    <location>
        <begin position="185"/>
        <end position="187"/>
    </location>
</feature>
<feature type="strand" evidence="8">
    <location>
        <begin position="189"/>
        <end position="192"/>
    </location>
</feature>
<feature type="strand" evidence="8">
    <location>
        <begin position="196"/>
        <end position="198"/>
    </location>
</feature>
<feature type="strand" evidence="8">
    <location>
        <begin position="202"/>
        <end position="207"/>
    </location>
</feature>
<feature type="strand" evidence="8">
    <location>
        <begin position="210"/>
        <end position="215"/>
    </location>
</feature>
<feature type="strand" evidence="13">
    <location>
        <begin position="219"/>
        <end position="221"/>
    </location>
</feature>
<feature type="helix" evidence="8">
    <location>
        <begin position="226"/>
        <end position="238"/>
    </location>
</feature>
<feature type="helix" evidence="8">
    <location>
        <begin position="248"/>
        <end position="253"/>
    </location>
</feature>
<feature type="helix" evidence="8">
    <location>
        <begin position="256"/>
        <end position="266"/>
    </location>
</feature>
<feature type="helix" evidence="8">
    <location>
        <begin position="270"/>
        <end position="281"/>
    </location>
</feature>
<feature type="strand" evidence="8">
    <location>
        <begin position="285"/>
        <end position="288"/>
    </location>
</feature>
<feature type="turn" evidence="8">
    <location>
        <begin position="297"/>
        <end position="299"/>
    </location>
</feature>
<feature type="helix" evidence="8">
    <location>
        <begin position="300"/>
        <end position="309"/>
    </location>
</feature>
<feature type="turn" evidence="8">
    <location>
        <begin position="314"/>
        <end position="319"/>
    </location>
</feature>
<feature type="strand" evidence="8">
    <location>
        <begin position="325"/>
        <end position="331"/>
    </location>
</feature>
<feature type="strand" evidence="9">
    <location>
        <begin position="333"/>
        <end position="335"/>
    </location>
</feature>
<feature type="strand" evidence="8">
    <location>
        <begin position="337"/>
        <end position="341"/>
    </location>
</feature>
<feature type="turn" evidence="8">
    <location>
        <begin position="343"/>
        <end position="345"/>
    </location>
</feature>
<feature type="helix" evidence="8">
    <location>
        <begin position="348"/>
        <end position="361"/>
    </location>
</feature>
<feature type="strand" evidence="12">
    <location>
        <begin position="379"/>
        <end position="381"/>
    </location>
</feature>
<feature type="helix" evidence="8">
    <location>
        <begin position="387"/>
        <end position="405"/>
    </location>
</feature>
<feature type="strand" evidence="8">
    <location>
        <begin position="407"/>
        <end position="414"/>
    </location>
</feature>
<feature type="helix" evidence="8">
    <location>
        <begin position="420"/>
        <end position="424"/>
    </location>
</feature>
<feature type="helix" evidence="8">
    <location>
        <begin position="429"/>
        <end position="445"/>
    </location>
</feature>
<feature type="strand" evidence="8">
    <location>
        <begin position="451"/>
        <end position="456"/>
    </location>
</feature>
<feature type="strand" evidence="8">
    <location>
        <begin position="465"/>
        <end position="469"/>
    </location>
</feature>
<feature type="helix" evidence="8">
    <location>
        <begin position="473"/>
        <end position="483"/>
    </location>
</feature>
<feature type="strand" evidence="11">
    <location>
        <begin position="485"/>
        <end position="487"/>
    </location>
</feature>
<feature type="helix" evidence="8">
    <location>
        <begin position="489"/>
        <end position="511"/>
    </location>
</feature>
<feature type="helix" evidence="8">
    <location>
        <begin position="517"/>
        <end position="529"/>
    </location>
</feature>
<feature type="helix" evidence="8">
    <location>
        <begin position="536"/>
        <end position="539"/>
    </location>
</feature>
<feature type="helix" evidence="8">
    <location>
        <begin position="541"/>
        <end position="546"/>
    </location>
</feature>
<feature type="strand" evidence="8">
    <location>
        <begin position="550"/>
        <end position="555"/>
    </location>
</feature>
<feature type="strand" evidence="8">
    <location>
        <begin position="559"/>
        <end position="561"/>
    </location>
</feature>
<feature type="strand" evidence="8">
    <location>
        <begin position="563"/>
        <end position="565"/>
    </location>
</feature>
<feature type="strand" evidence="8">
    <location>
        <begin position="574"/>
        <end position="580"/>
    </location>
</feature>
<feature type="strand" evidence="8">
    <location>
        <begin position="585"/>
        <end position="592"/>
    </location>
</feature>
<feature type="helix" evidence="8">
    <location>
        <begin position="600"/>
        <end position="619"/>
    </location>
</feature>
<protein>
    <recommendedName>
        <fullName evidence="5">Carnitine O-acetyltransferase</fullName>
        <shortName>Carnitine acetylase</shortName>
        <ecNumber evidence="1">2.3.1.137</ecNumber>
        <ecNumber evidence="1">2.3.1.7</ecNumber>
    </recommendedName>
    <alternativeName>
        <fullName>Carnitine acetyltransferase</fullName>
        <shortName>CAT</shortName>
        <shortName>CrAT</shortName>
    </alternativeName>
</protein>
<organism>
    <name type="scientific">Mus musculus</name>
    <name type="common">Mouse</name>
    <dbReference type="NCBI Taxonomy" id="10090"/>
    <lineage>
        <taxon>Eukaryota</taxon>
        <taxon>Metazoa</taxon>
        <taxon>Chordata</taxon>
        <taxon>Craniata</taxon>
        <taxon>Vertebrata</taxon>
        <taxon>Euteleostomi</taxon>
        <taxon>Mammalia</taxon>
        <taxon>Eutheria</taxon>
        <taxon>Euarchontoglires</taxon>
        <taxon>Glires</taxon>
        <taxon>Rodentia</taxon>
        <taxon>Myomorpha</taxon>
        <taxon>Muroidea</taxon>
        <taxon>Muridae</taxon>
        <taxon>Murinae</taxon>
        <taxon>Mus</taxon>
        <taxon>Mus</taxon>
    </lineage>
</organism>
<name>CACP_MOUSE</name>
<accession>P47934</accession>
<accession>Q3TCG3</accession>
<accession>Q3V1Y3</accession>
<accession>Q923A6</accession>
<dbReference type="EC" id="2.3.1.137" evidence="1"/>
<dbReference type="EC" id="2.3.1.7" evidence="1"/>
<dbReference type="EMBL" id="X85983">
    <property type="protein sequence ID" value="CAA59971.1"/>
    <property type="molecule type" value="mRNA"/>
</dbReference>
<dbReference type="EMBL" id="AK132179">
    <property type="protein sequence ID" value="BAE21016.1"/>
    <property type="molecule type" value="mRNA"/>
</dbReference>
<dbReference type="EMBL" id="AK170740">
    <property type="protein sequence ID" value="BAE41993.1"/>
    <property type="molecule type" value="mRNA"/>
</dbReference>
<dbReference type="EMBL" id="AL954299">
    <property type="status" value="NOT_ANNOTATED_CDS"/>
    <property type="molecule type" value="Genomic_DNA"/>
</dbReference>
<dbReference type="EMBL" id="AL954388">
    <property type="status" value="NOT_ANNOTATED_CDS"/>
    <property type="molecule type" value="Genomic_DNA"/>
</dbReference>
<dbReference type="EMBL" id="BC006668">
    <property type="protein sequence ID" value="AAH06668.1"/>
    <property type="molecule type" value="mRNA"/>
</dbReference>
<dbReference type="CCDS" id="CCDS15882.1"/>
<dbReference type="PIR" id="S52782">
    <property type="entry name" value="S52782"/>
</dbReference>
<dbReference type="RefSeq" id="NP_031786.2">
    <property type="nucleotide sequence ID" value="NM_007760.4"/>
</dbReference>
<dbReference type="PDB" id="1NDB">
    <property type="method" value="X-ray"/>
    <property type="resolution" value="1.80 A"/>
    <property type="chains" value="A/B=30-625"/>
</dbReference>
<dbReference type="PDB" id="1NDF">
    <property type="method" value="X-ray"/>
    <property type="resolution" value="1.90 A"/>
    <property type="chains" value="A/B=30-625"/>
</dbReference>
<dbReference type="PDB" id="1NDI">
    <property type="method" value="X-ray"/>
    <property type="resolution" value="2.30 A"/>
    <property type="chains" value="A/B=30-625"/>
</dbReference>
<dbReference type="PDB" id="1T7N">
    <property type="method" value="X-ray"/>
    <property type="resolution" value="1.90 A"/>
    <property type="chains" value="A=30-626"/>
</dbReference>
<dbReference type="PDB" id="1T7O">
    <property type="method" value="X-ray"/>
    <property type="resolution" value="2.30 A"/>
    <property type="chains" value="A=30-626"/>
</dbReference>
<dbReference type="PDB" id="1T7Q">
    <property type="method" value="X-ray"/>
    <property type="resolution" value="1.80 A"/>
    <property type="chains" value="A/B=30-626"/>
</dbReference>
<dbReference type="PDB" id="2H3P">
    <property type="method" value="X-ray"/>
    <property type="resolution" value="2.20 A"/>
    <property type="chains" value="A/B=30-625"/>
</dbReference>
<dbReference type="PDB" id="2H3U">
    <property type="method" value="X-ray"/>
    <property type="resolution" value="1.90 A"/>
    <property type="chains" value="A/B=30-625"/>
</dbReference>
<dbReference type="PDB" id="2H3W">
    <property type="method" value="X-ray"/>
    <property type="resolution" value="2.10 A"/>
    <property type="chains" value="A/B=30-625"/>
</dbReference>
<dbReference type="PDBsum" id="1NDB"/>
<dbReference type="PDBsum" id="1NDF"/>
<dbReference type="PDBsum" id="1NDI"/>
<dbReference type="PDBsum" id="1T7N"/>
<dbReference type="PDBsum" id="1T7O"/>
<dbReference type="PDBsum" id="1T7Q"/>
<dbReference type="PDBsum" id="2H3P"/>
<dbReference type="PDBsum" id="2H3U"/>
<dbReference type="PDBsum" id="2H3W"/>
<dbReference type="SMR" id="P47934"/>
<dbReference type="BioGRID" id="198871">
    <property type="interactions" value="26"/>
</dbReference>
<dbReference type="FunCoup" id="P47934">
    <property type="interactions" value="1564"/>
</dbReference>
<dbReference type="IntAct" id="P47934">
    <property type="interactions" value="3"/>
</dbReference>
<dbReference type="STRING" id="10090.ENSMUSP00000099919"/>
<dbReference type="GlyGen" id="P47934">
    <property type="glycosylation" value="1 site, 1 O-linked glycan (1 site)"/>
</dbReference>
<dbReference type="iPTMnet" id="P47934"/>
<dbReference type="PhosphoSitePlus" id="P47934"/>
<dbReference type="SwissPalm" id="P47934"/>
<dbReference type="jPOST" id="P47934"/>
<dbReference type="PaxDb" id="10090-ENSMUSP00000028207"/>
<dbReference type="ProteomicsDB" id="273892"/>
<dbReference type="Pumba" id="P47934"/>
<dbReference type="Antibodypedia" id="17825">
    <property type="antibodies" value="238 antibodies from 30 providers"/>
</dbReference>
<dbReference type="DNASU" id="12908"/>
<dbReference type="Ensembl" id="ENSMUST00000028207.13">
    <property type="protein sequence ID" value="ENSMUSP00000028207.7"/>
    <property type="gene ID" value="ENSMUSG00000026853.16"/>
</dbReference>
<dbReference type="Ensembl" id="ENSMUST00000102855.8">
    <property type="protein sequence ID" value="ENSMUSP00000099919.2"/>
    <property type="gene ID" value="ENSMUSG00000026853.16"/>
</dbReference>
<dbReference type="GeneID" id="12908"/>
<dbReference type="KEGG" id="mmu:12908"/>
<dbReference type="UCSC" id="uc008jcl.1">
    <property type="organism name" value="mouse"/>
</dbReference>
<dbReference type="AGR" id="MGI:109501"/>
<dbReference type="CTD" id="1384"/>
<dbReference type="MGI" id="MGI:109501">
    <property type="gene designation" value="Crat"/>
</dbReference>
<dbReference type="VEuPathDB" id="HostDB:ENSMUSG00000026853"/>
<dbReference type="eggNOG" id="KOG3717">
    <property type="taxonomic scope" value="Eukaryota"/>
</dbReference>
<dbReference type="GeneTree" id="ENSGT01130000278297"/>
<dbReference type="InParanoid" id="P47934"/>
<dbReference type="OMA" id="ENHSKGP"/>
<dbReference type="OrthoDB" id="240216at2759"/>
<dbReference type="PhylomeDB" id="P47934"/>
<dbReference type="TreeFam" id="TF313836"/>
<dbReference type="BRENDA" id="2.3.1.7">
    <property type="organism ID" value="3474"/>
</dbReference>
<dbReference type="Reactome" id="R-MMU-389887">
    <property type="pathway name" value="Beta-oxidation of pristanoyl-CoA"/>
</dbReference>
<dbReference type="Reactome" id="R-MMU-9033241">
    <property type="pathway name" value="Peroxisomal protein import"/>
</dbReference>
<dbReference type="BioGRID-ORCS" id="12908">
    <property type="hits" value="2 hits in 79 CRISPR screens"/>
</dbReference>
<dbReference type="ChiTaRS" id="Crat">
    <property type="organism name" value="mouse"/>
</dbReference>
<dbReference type="EvolutionaryTrace" id="P47934"/>
<dbReference type="PRO" id="PR:P47934"/>
<dbReference type="Proteomes" id="UP000000589">
    <property type="component" value="Chromosome 2"/>
</dbReference>
<dbReference type="RNAct" id="P47934">
    <property type="molecule type" value="protein"/>
</dbReference>
<dbReference type="Bgee" id="ENSMUSG00000026853">
    <property type="expression patterns" value="Expressed in hindlimb stylopod muscle and 274 other cell types or tissues"/>
</dbReference>
<dbReference type="ExpressionAtlas" id="P47934">
    <property type="expression patterns" value="baseline and differential"/>
</dbReference>
<dbReference type="GO" id="GO:0005783">
    <property type="term" value="C:endoplasmic reticulum"/>
    <property type="evidence" value="ECO:0007669"/>
    <property type="project" value="UniProtKB-SubCell"/>
</dbReference>
<dbReference type="GO" id="GO:0005743">
    <property type="term" value="C:mitochondrial inner membrane"/>
    <property type="evidence" value="ECO:0007669"/>
    <property type="project" value="UniProtKB-SubCell"/>
</dbReference>
<dbReference type="GO" id="GO:0005739">
    <property type="term" value="C:mitochondrion"/>
    <property type="evidence" value="ECO:0007005"/>
    <property type="project" value="MGI"/>
</dbReference>
<dbReference type="GO" id="GO:0005777">
    <property type="term" value="C:peroxisome"/>
    <property type="evidence" value="ECO:0007669"/>
    <property type="project" value="UniProtKB-SubCell"/>
</dbReference>
<dbReference type="GO" id="GO:0003997">
    <property type="term" value="F:acyl-CoA oxidase activity"/>
    <property type="evidence" value="ECO:0000250"/>
    <property type="project" value="UniProtKB"/>
</dbReference>
<dbReference type="GO" id="GO:0004092">
    <property type="term" value="F:carnitine O-acetyltransferase activity"/>
    <property type="evidence" value="ECO:0000250"/>
    <property type="project" value="UniProtKB"/>
</dbReference>
<dbReference type="GO" id="GO:0008458">
    <property type="term" value="F:carnitine O-octanoyltransferase activity"/>
    <property type="evidence" value="ECO:0007669"/>
    <property type="project" value="UniProtKB-EC"/>
</dbReference>
<dbReference type="GO" id="GO:0019254">
    <property type="term" value="P:carnitine metabolic process, CoA-linked"/>
    <property type="evidence" value="ECO:0000250"/>
    <property type="project" value="UniProtKB"/>
</dbReference>
<dbReference type="GO" id="GO:0033540">
    <property type="term" value="P:fatty acid beta-oxidation using acyl-CoA oxidase"/>
    <property type="evidence" value="ECO:0000250"/>
    <property type="project" value="UniProtKB"/>
</dbReference>
<dbReference type="GO" id="GO:0051791">
    <property type="term" value="P:medium-chain fatty acid metabolic process"/>
    <property type="evidence" value="ECO:0000250"/>
    <property type="project" value="UniProtKB"/>
</dbReference>
<dbReference type="GO" id="GO:0046459">
    <property type="term" value="P:short-chain fatty acid metabolic process"/>
    <property type="evidence" value="ECO:0000250"/>
    <property type="project" value="UniProtKB"/>
</dbReference>
<dbReference type="FunFam" id="3.30.559.10:FF:000001">
    <property type="entry name" value="Carnitine O-acetyltransferase"/>
    <property type="match status" value="1"/>
</dbReference>
<dbReference type="FunFam" id="3.30.559.70:FF:000002">
    <property type="entry name" value="Carnitine O-acetyltransferase"/>
    <property type="match status" value="1"/>
</dbReference>
<dbReference type="Gene3D" id="3.30.559.10">
    <property type="entry name" value="Chloramphenicol acetyltransferase-like domain"/>
    <property type="match status" value="1"/>
</dbReference>
<dbReference type="Gene3D" id="3.30.559.70">
    <property type="entry name" value="Choline/Carnitine o-acyltransferase, domain 2"/>
    <property type="match status" value="1"/>
</dbReference>
<dbReference type="InterPro" id="IPR000542">
    <property type="entry name" value="Carn_acyl_trans"/>
</dbReference>
<dbReference type="InterPro" id="IPR023213">
    <property type="entry name" value="CAT-like_dom_sf"/>
</dbReference>
<dbReference type="InterPro" id="IPR039551">
    <property type="entry name" value="Cho/carn_acyl_trans"/>
</dbReference>
<dbReference type="InterPro" id="IPR042231">
    <property type="entry name" value="Cho/carn_acyl_trans_2"/>
</dbReference>
<dbReference type="PANTHER" id="PTHR22589:SF50">
    <property type="entry name" value="CARNITINE O-ACETYLTRANSFERASE"/>
    <property type="match status" value="1"/>
</dbReference>
<dbReference type="PANTHER" id="PTHR22589">
    <property type="entry name" value="CARNITINE O-ACYLTRANSFERASE"/>
    <property type="match status" value="1"/>
</dbReference>
<dbReference type="Pfam" id="PF00755">
    <property type="entry name" value="Carn_acyltransf"/>
    <property type="match status" value="1"/>
</dbReference>
<dbReference type="SUPFAM" id="SSF52777">
    <property type="entry name" value="CoA-dependent acyltransferases"/>
    <property type="match status" value="2"/>
</dbReference>
<dbReference type="PROSITE" id="PS00439">
    <property type="entry name" value="ACYLTRANSF_C_1"/>
    <property type="match status" value="1"/>
</dbReference>
<dbReference type="PROSITE" id="PS00440">
    <property type="entry name" value="ACYLTRANSF_C_2"/>
    <property type="match status" value="1"/>
</dbReference>
<comment type="function">
    <text evidence="1">Catalyzes the reversible transfer of acyl groups from carnitine to coenzyme A (CoA) and regulates the acyl-CoA/CoA ratio. Also plays a crucial role in the transport of fatty acids for beta-oxidation. Responsible for the synthesis of short- and branched-chain acylcarnitines. Active towards some branched-chain amino acid oxidation pathway (BCAAO) intermediates. Trans-2-enoyl-CoAs and 2-methylacyl-CoAs are poor substrates.</text>
</comment>
<comment type="catalytic activity">
    <reaction evidence="1">
        <text>(R)-carnitine + acetyl-CoA = O-acetyl-(R)-carnitine + CoA</text>
        <dbReference type="Rhea" id="RHEA:21136"/>
        <dbReference type="ChEBI" id="CHEBI:16347"/>
        <dbReference type="ChEBI" id="CHEBI:57287"/>
        <dbReference type="ChEBI" id="CHEBI:57288"/>
        <dbReference type="ChEBI" id="CHEBI:57589"/>
        <dbReference type="EC" id="2.3.1.7"/>
    </reaction>
    <physiologicalReaction direction="left-to-right" evidence="1">
        <dbReference type="Rhea" id="RHEA:21137"/>
    </physiologicalReaction>
</comment>
<comment type="catalytic activity">
    <reaction evidence="1">
        <text>propanoyl-CoA + (R)-carnitine = O-propanoyl-(R)-carnitine + CoA</text>
        <dbReference type="Rhea" id="RHEA:44976"/>
        <dbReference type="ChEBI" id="CHEBI:16347"/>
        <dbReference type="ChEBI" id="CHEBI:53210"/>
        <dbReference type="ChEBI" id="CHEBI:57287"/>
        <dbReference type="ChEBI" id="CHEBI:57392"/>
    </reaction>
    <physiologicalReaction direction="left-to-right" evidence="1">
        <dbReference type="Rhea" id="RHEA:44977"/>
    </physiologicalReaction>
</comment>
<comment type="catalytic activity">
    <reaction evidence="1">
        <text>butanoyl-CoA + (R)-carnitine = O-butanoyl-(R)-carnitine + CoA</text>
        <dbReference type="Rhea" id="RHEA:44980"/>
        <dbReference type="ChEBI" id="CHEBI:16347"/>
        <dbReference type="ChEBI" id="CHEBI:21949"/>
        <dbReference type="ChEBI" id="CHEBI:57287"/>
        <dbReference type="ChEBI" id="CHEBI:57371"/>
    </reaction>
    <physiologicalReaction direction="left-to-right" evidence="1">
        <dbReference type="Rhea" id="RHEA:44981"/>
    </physiologicalReaction>
</comment>
<comment type="catalytic activity">
    <reaction evidence="1">
        <text>hexanoyl-CoA + (R)-carnitine = O-hexanoyl-(R)-carnitine + CoA</text>
        <dbReference type="Rhea" id="RHEA:44972"/>
        <dbReference type="ChEBI" id="CHEBI:16347"/>
        <dbReference type="ChEBI" id="CHEBI:57287"/>
        <dbReference type="ChEBI" id="CHEBI:62620"/>
        <dbReference type="ChEBI" id="CHEBI:84834"/>
    </reaction>
    <physiologicalReaction direction="left-to-right" evidence="1">
        <dbReference type="Rhea" id="RHEA:44973"/>
    </physiologicalReaction>
</comment>
<comment type="catalytic activity">
    <reaction evidence="1">
        <text>octanoyl-CoA + (R)-carnitine = O-octanoyl-(R)-carnitine + CoA</text>
        <dbReference type="Rhea" id="RHEA:17177"/>
        <dbReference type="ChEBI" id="CHEBI:16347"/>
        <dbReference type="ChEBI" id="CHEBI:18102"/>
        <dbReference type="ChEBI" id="CHEBI:57287"/>
        <dbReference type="ChEBI" id="CHEBI:57386"/>
        <dbReference type="EC" id="2.3.1.137"/>
    </reaction>
    <physiologicalReaction direction="left-to-right" evidence="1">
        <dbReference type="Rhea" id="RHEA:17178"/>
    </physiologicalReaction>
</comment>
<comment type="catalytic activity">
    <reaction evidence="1">
        <text>decanoyl-CoA + (R)-carnitine = O-decanoyl-(R)-carnitine + CoA</text>
        <dbReference type="Rhea" id="RHEA:44828"/>
        <dbReference type="ChEBI" id="CHEBI:16347"/>
        <dbReference type="ChEBI" id="CHEBI:28717"/>
        <dbReference type="ChEBI" id="CHEBI:57287"/>
        <dbReference type="ChEBI" id="CHEBI:61430"/>
    </reaction>
    <physiologicalReaction direction="left-to-right" evidence="1">
        <dbReference type="Rhea" id="RHEA:44829"/>
    </physiologicalReaction>
</comment>
<comment type="catalytic activity">
    <reaction evidence="1">
        <text>3-methylbutanoyl-CoA + (R)-carnitine = O-3-methylbutanoyl-(R)-carnitine + CoA</text>
        <dbReference type="Rhea" id="RHEA:44984"/>
        <dbReference type="ChEBI" id="CHEBI:16347"/>
        <dbReference type="ChEBI" id="CHEBI:57287"/>
        <dbReference type="ChEBI" id="CHEBI:57345"/>
        <dbReference type="ChEBI" id="CHEBI:70819"/>
    </reaction>
    <physiologicalReaction direction="left-to-right" evidence="1">
        <dbReference type="Rhea" id="RHEA:44985"/>
    </physiologicalReaction>
</comment>
<comment type="catalytic activity">
    <reaction evidence="1">
        <text>2-methylpropanoyl-CoA + (R)-carnitine = O-isobutanoyl-(R)-carnitine + CoA</text>
        <dbReference type="Rhea" id="RHEA:44988"/>
        <dbReference type="ChEBI" id="CHEBI:16347"/>
        <dbReference type="ChEBI" id="CHEBI:57287"/>
        <dbReference type="ChEBI" id="CHEBI:57338"/>
        <dbReference type="ChEBI" id="CHEBI:84838"/>
    </reaction>
    <physiologicalReaction direction="left-to-right" evidence="1">
        <dbReference type="Rhea" id="RHEA:44989"/>
    </physiologicalReaction>
</comment>
<comment type="catalytic activity">
    <reaction evidence="1">
        <text>2-methylbutanoyl-CoA + (R)-carnitine = O-2-methylbutanoyl-(R)-carnitine + CoA</text>
        <dbReference type="Rhea" id="RHEA:44992"/>
        <dbReference type="ChEBI" id="CHEBI:16347"/>
        <dbReference type="ChEBI" id="CHEBI:57287"/>
        <dbReference type="ChEBI" id="CHEBI:57336"/>
        <dbReference type="ChEBI" id="CHEBI:84840"/>
    </reaction>
    <physiologicalReaction direction="left-to-right" evidence="1">
        <dbReference type="Rhea" id="RHEA:44993"/>
    </physiologicalReaction>
</comment>
<comment type="catalytic activity">
    <reaction evidence="1">
        <text>acetoacetyl-CoA + (R)-carnitine = O-3-oxobutanoyl-(R)-carnitine + CoA</text>
        <dbReference type="Rhea" id="RHEA:44996"/>
        <dbReference type="ChEBI" id="CHEBI:16347"/>
        <dbReference type="ChEBI" id="CHEBI:57286"/>
        <dbReference type="ChEBI" id="CHEBI:57287"/>
        <dbReference type="ChEBI" id="CHEBI:84841"/>
    </reaction>
    <physiologicalReaction direction="left-to-right" evidence="1">
        <dbReference type="Rhea" id="RHEA:44997"/>
    </physiologicalReaction>
</comment>
<comment type="catalytic activity">
    <reaction evidence="1">
        <text>3-hydroxybutanoyl-CoA + (R)-carnitine = O-3-hydroxybutanoyl-(R)-carnitine + CoA</text>
        <dbReference type="Rhea" id="RHEA:45000"/>
        <dbReference type="ChEBI" id="CHEBI:16347"/>
        <dbReference type="ChEBI" id="CHEBI:57287"/>
        <dbReference type="ChEBI" id="CHEBI:78611"/>
        <dbReference type="ChEBI" id="CHEBI:84842"/>
    </reaction>
    <physiologicalReaction direction="left-to-right" evidence="1">
        <dbReference type="Rhea" id="RHEA:45001"/>
    </physiologicalReaction>
</comment>
<comment type="catalytic activity">
    <reaction evidence="1">
        <text>4,8-dimethylnonanoyl-CoA + (R)-carnitine = O-4,8-dimethylnonanoyl-(R)-carnitine + CoA</text>
        <dbReference type="Rhea" id="RHEA:44860"/>
        <dbReference type="ChEBI" id="CHEBI:16347"/>
        <dbReference type="ChEBI" id="CHEBI:57287"/>
        <dbReference type="ChEBI" id="CHEBI:77061"/>
        <dbReference type="ChEBI" id="CHEBI:84654"/>
    </reaction>
    <physiologicalReaction direction="left-to-right" evidence="1">
        <dbReference type="Rhea" id="RHEA:44861"/>
    </physiologicalReaction>
</comment>
<comment type="catalytic activity">
    <reaction evidence="1">
        <text>2,6-dimethylheptanoyl-CoA + (R)-carnitine = O-2,6-dimethylheptanoyl-(R)-carnitine + CoA</text>
        <dbReference type="Rhea" id="RHEA:45004"/>
        <dbReference type="ChEBI" id="CHEBI:16347"/>
        <dbReference type="ChEBI" id="CHEBI:57287"/>
        <dbReference type="ChEBI" id="CHEBI:84843"/>
        <dbReference type="ChEBI" id="CHEBI:84847"/>
    </reaction>
    <physiologicalReaction direction="left-to-right" evidence="1">
        <dbReference type="Rhea" id="RHEA:45005"/>
    </physiologicalReaction>
</comment>
<comment type="subunit">
    <text evidence="3 4">Monomer.</text>
</comment>
<comment type="subcellular location">
    <subcellularLocation>
        <location evidence="5">Endoplasmic reticulum</location>
    </subcellularLocation>
    <subcellularLocation>
        <location evidence="5">Peroxisome</location>
    </subcellularLocation>
    <subcellularLocation>
        <location evidence="5">Mitochondrion inner membrane</location>
        <topology evidence="5">Peripheral membrane protein</topology>
        <orientation evidence="5">Matrix side</orientation>
    </subcellularLocation>
</comment>
<comment type="similarity">
    <text evidence="5">Belongs to the carnitine/choline acetyltransferase family.</text>
</comment>
<keyword id="KW-0002">3D-structure</keyword>
<keyword id="KW-0007">Acetylation</keyword>
<keyword id="KW-0012">Acyltransferase</keyword>
<keyword id="KW-0256">Endoplasmic reticulum</keyword>
<keyword id="KW-0276">Fatty acid metabolism</keyword>
<keyword id="KW-0443">Lipid metabolism</keyword>
<keyword id="KW-0472">Membrane</keyword>
<keyword id="KW-0496">Mitochondrion</keyword>
<keyword id="KW-0999">Mitochondrion inner membrane</keyword>
<keyword id="KW-0576">Peroxisome</keyword>
<keyword id="KW-1185">Reference proteome</keyword>
<keyword id="KW-0808">Transferase</keyword>
<keyword id="KW-0813">Transport</keyword>
<gene>
    <name evidence="6" type="primary">Crat</name>
</gene>
<evidence type="ECO:0000250" key="1">
    <source>
        <dbReference type="UniProtKB" id="P43155"/>
    </source>
</evidence>
<evidence type="ECO:0000255" key="2"/>
<evidence type="ECO:0000269" key="3">
    <source>
    </source>
</evidence>
<evidence type="ECO:0000269" key="4">
    <source>
    </source>
</evidence>
<evidence type="ECO:0000305" key="5"/>
<evidence type="ECO:0000312" key="6">
    <source>
        <dbReference type="MGI" id="MGI:109501"/>
    </source>
</evidence>
<evidence type="ECO:0007744" key="7">
    <source>
    </source>
</evidence>
<evidence type="ECO:0007829" key="8">
    <source>
        <dbReference type="PDB" id="1NDB"/>
    </source>
</evidence>
<evidence type="ECO:0007829" key="9">
    <source>
        <dbReference type="PDB" id="1NDF"/>
    </source>
</evidence>
<evidence type="ECO:0007829" key="10">
    <source>
        <dbReference type="PDB" id="1T7N"/>
    </source>
</evidence>
<evidence type="ECO:0007829" key="11">
    <source>
        <dbReference type="PDB" id="1T7O"/>
    </source>
</evidence>
<evidence type="ECO:0007829" key="12">
    <source>
        <dbReference type="PDB" id="1T7Q"/>
    </source>
</evidence>
<evidence type="ECO:0007829" key="13">
    <source>
        <dbReference type="PDB" id="2H3U"/>
    </source>
</evidence>
<sequence length="626" mass="70840">MLAFAARTVVKPLGLLKPSSLMKVSGRFKAHQDALPRLPVPPLQQSLDYYLKALQPIVSEEEWAHTKQLVDEFQTSGGVGERLQKGLERRAKKMENWLSEWWLKTAYLQFRQPVVIYSSPGVILPKQDFVDLQGQLRFAAKLIEGVLDFKSMIDNETLPVEFLGGQPLCMNQYYQILSSCRVPGPKQDSVVNFLKSKRPPTHITVVHNYQFFELDVYHSDGTPLTSDQIFVQLEKIWNSSLQSNKEPVGILTSNHRNTWAKAYNNLIKDKVNRESVNSIQKSIFTVCLDKQVPRVSDDVYRNHVAGQMLHGGGSKFNSGNRWFDKTLQFIVAEDGSCGMVYEHAAAEGPPIVALVDHVMEYTKKPELVRSPMVPLPMPKKLRFNITPEIKNDIEKAKQNLSIMIQDLDIMMLTFHHFGKDFPKSEKLSPDAFIQVALQLAYYRIYGQACATYESASLRMFHLGRTDTIRSASIDSLAFVKGMGDSTVPEQQKVELLRKAVQAHRAYTDRAIRGEAFDRHLLGLKLQAIEDLVSMPDIFMDTSYAIAMHFNLSTSQVPAKTDCVMFFGPVVPDGYGICYNPMEAHINFSVSAYNSCAETNAARMAHYLEKALLDMRTLLQNHPRAKL</sequence>